<protein>
    <recommendedName>
        <fullName>Solute carrier family 35 member F5</fullName>
    </recommendedName>
</protein>
<feature type="chain" id="PRO_0000311959" description="Solute carrier family 35 member F5">
    <location>
        <begin position="1"/>
        <end position="523"/>
    </location>
</feature>
<feature type="transmembrane region" description="Helical" evidence="2">
    <location>
        <begin position="69"/>
        <end position="89"/>
    </location>
</feature>
<feature type="transmembrane region" description="Helical" evidence="2">
    <location>
        <begin position="101"/>
        <end position="121"/>
    </location>
</feature>
<feature type="transmembrane region" description="Helical" evidence="2">
    <location>
        <begin position="243"/>
        <end position="263"/>
    </location>
</feature>
<feature type="transmembrane region" description="Helical" evidence="2">
    <location>
        <begin position="268"/>
        <end position="288"/>
    </location>
</feature>
<feature type="transmembrane region" description="Helical" evidence="2">
    <location>
        <begin position="296"/>
        <end position="316"/>
    </location>
</feature>
<feature type="transmembrane region" description="Helical" evidence="2">
    <location>
        <begin position="327"/>
        <end position="347"/>
    </location>
</feature>
<feature type="transmembrane region" description="Helical" evidence="2">
    <location>
        <begin position="361"/>
        <end position="381"/>
    </location>
</feature>
<feature type="transmembrane region" description="Helical" evidence="2">
    <location>
        <begin position="395"/>
        <end position="415"/>
    </location>
</feature>
<feature type="transmembrane region" description="Helical" evidence="2">
    <location>
        <begin position="420"/>
        <end position="440"/>
    </location>
</feature>
<feature type="transmembrane region" description="Helical" evidence="2">
    <location>
        <begin position="452"/>
        <end position="472"/>
    </location>
</feature>
<feature type="domain" description="EamA">
    <location>
        <begin position="252"/>
        <end position="316"/>
    </location>
</feature>
<feature type="modified residue" description="Phosphoserine" evidence="1">
    <location>
        <position position="207"/>
    </location>
</feature>
<sequence>MVPPRRHRGAGRPGVLSSSPPFRLRSAKFSGIALEDLRRALKTRLQMVCVFIMNRMNSQNSGFTQRRRMALGIVILLLVDVIWVASSELTSYVFTQYNKPFFSTFAKTSMFVLYLLGFIIWKPWRQQCTRGLRGKHAAFFADAEGYFAACATDTTMNSSLSEPLYVPVKFHDLPSEKPESTNIDTEKTPKKSRVRFSNIMEIRQLPSNHALESKLSRMSYPVKEQESILKTVGKLTATQVAKISFFFCFVWFLANLSYQEALSDTQVAIVNILSSTSGLFTLILAAVFPSNSGDRFTLSKLLAVILSIGGVVLVNLSGSEKSAGRDTIGSIWSLAGAMLYAVYIVMIKRKVDREDKLDIPMFFGFVGLFNLLLLWPGFFLLHYTGFEDFEFPNKVVLMCIIINGLIGTVLSEFLWLWGCFLTSSLIGTLALSLTIPLSIIADMCMQKVQFSWLFFAGAIPVFFSFFIVTLLCHYNNWDPVMVGIRRIFAFICRKHRIQRVPEDSEQCESLISMHSVSQEDGDS</sequence>
<comment type="function">
    <text evidence="3">Putative solute transporter.</text>
</comment>
<comment type="subcellular location">
    <subcellularLocation>
        <location evidence="3">Membrane</location>
        <topology evidence="3">Multi-pass membrane protein</topology>
    </subcellularLocation>
</comment>
<comment type="similarity">
    <text evidence="3">Belongs to the SLC35F solute transporter family.</text>
</comment>
<name>S35F5_PONAB</name>
<proteinExistence type="evidence at transcript level"/>
<gene>
    <name type="primary">SLC35F5</name>
</gene>
<evidence type="ECO:0000250" key="1">
    <source>
        <dbReference type="UniProtKB" id="Q8WV83"/>
    </source>
</evidence>
<evidence type="ECO:0000255" key="2"/>
<evidence type="ECO:0000305" key="3"/>
<organism>
    <name type="scientific">Pongo abelii</name>
    <name type="common">Sumatran orangutan</name>
    <name type="synonym">Pongo pygmaeus abelii</name>
    <dbReference type="NCBI Taxonomy" id="9601"/>
    <lineage>
        <taxon>Eukaryota</taxon>
        <taxon>Metazoa</taxon>
        <taxon>Chordata</taxon>
        <taxon>Craniata</taxon>
        <taxon>Vertebrata</taxon>
        <taxon>Euteleostomi</taxon>
        <taxon>Mammalia</taxon>
        <taxon>Eutheria</taxon>
        <taxon>Euarchontoglires</taxon>
        <taxon>Primates</taxon>
        <taxon>Haplorrhini</taxon>
        <taxon>Catarrhini</taxon>
        <taxon>Hominidae</taxon>
        <taxon>Pongo</taxon>
    </lineage>
</organism>
<keyword id="KW-0472">Membrane</keyword>
<keyword id="KW-0597">Phosphoprotein</keyword>
<keyword id="KW-1185">Reference proteome</keyword>
<keyword id="KW-0812">Transmembrane</keyword>
<keyword id="KW-1133">Transmembrane helix</keyword>
<keyword id="KW-0813">Transport</keyword>
<accession>Q5R6J3</accession>
<reference key="1">
    <citation type="submission" date="2004-11" db="EMBL/GenBank/DDBJ databases">
        <authorList>
            <consortium name="The German cDNA consortium"/>
        </authorList>
    </citation>
    <scope>NUCLEOTIDE SEQUENCE [LARGE SCALE MRNA]</scope>
    <source>
        <tissue>Kidney</tissue>
    </source>
</reference>
<dbReference type="EMBL" id="CR860496">
    <property type="protein sequence ID" value="CAH92617.1"/>
    <property type="molecule type" value="mRNA"/>
</dbReference>
<dbReference type="RefSeq" id="NP_001126533.1">
    <property type="nucleotide sequence ID" value="NM_001133061.1"/>
</dbReference>
<dbReference type="FunCoup" id="Q5R6J3">
    <property type="interactions" value="2322"/>
</dbReference>
<dbReference type="GeneID" id="100173522"/>
<dbReference type="KEGG" id="pon:100173522"/>
<dbReference type="CTD" id="80255"/>
<dbReference type="eggNOG" id="KOG2765">
    <property type="taxonomic scope" value="Eukaryota"/>
</dbReference>
<dbReference type="InParanoid" id="Q5R6J3"/>
<dbReference type="OrthoDB" id="10041630at2759"/>
<dbReference type="Proteomes" id="UP000001595">
    <property type="component" value="Unplaced"/>
</dbReference>
<dbReference type="GO" id="GO:0016020">
    <property type="term" value="C:membrane"/>
    <property type="evidence" value="ECO:0007669"/>
    <property type="project" value="UniProtKB-SubCell"/>
</dbReference>
<dbReference type="PANTHER" id="PTHR23051:SF0">
    <property type="entry name" value="SOLUTE CARRIER FAMILY 35 MEMBER F5"/>
    <property type="match status" value="1"/>
</dbReference>
<dbReference type="PANTHER" id="PTHR23051">
    <property type="entry name" value="SOLUTE CARRIER FAMILY 35, MEMBER F5"/>
    <property type="match status" value="1"/>
</dbReference>
<dbReference type="SUPFAM" id="SSF103481">
    <property type="entry name" value="Multidrug resistance efflux transporter EmrE"/>
    <property type="match status" value="1"/>
</dbReference>